<name>HTPX_CALS4</name>
<comment type="cofactor">
    <cofactor evidence="1">
        <name>Zn(2+)</name>
        <dbReference type="ChEBI" id="CHEBI:29105"/>
    </cofactor>
    <text evidence="1">Binds 1 zinc ion per subunit.</text>
</comment>
<comment type="subcellular location">
    <subcellularLocation>
        <location evidence="1">Cell membrane</location>
        <topology evidence="1">Multi-pass membrane protein</topology>
    </subcellularLocation>
</comment>
<comment type="similarity">
    <text evidence="1">Belongs to the peptidase M48B family.</text>
</comment>
<keyword id="KW-1003">Cell membrane</keyword>
<keyword id="KW-0378">Hydrolase</keyword>
<keyword id="KW-0472">Membrane</keyword>
<keyword id="KW-0479">Metal-binding</keyword>
<keyword id="KW-0482">Metalloprotease</keyword>
<keyword id="KW-0645">Protease</keyword>
<keyword id="KW-1185">Reference proteome</keyword>
<keyword id="KW-0812">Transmembrane</keyword>
<keyword id="KW-1133">Transmembrane helix</keyword>
<keyword id="KW-0862">Zinc</keyword>
<proteinExistence type="inferred from homology"/>
<organism>
    <name type="scientific">Caldanaerobacter subterraneus subsp. tengcongensis (strain DSM 15242 / JCM 11007 / NBRC 100824 / MB4)</name>
    <name type="common">Thermoanaerobacter tengcongensis</name>
    <dbReference type="NCBI Taxonomy" id="273068"/>
    <lineage>
        <taxon>Bacteria</taxon>
        <taxon>Bacillati</taxon>
        <taxon>Bacillota</taxon>
        <taxon>Clostridia</taxon>
        <taxon>Thermoanaerobacterales</taxon>
        <taxon>Thermoanaerobacteraceae</taxon>
        <taxon>Caldanaerobacter</taxon>
    </lineage>
</organism>
<protein>
    <recommendedName>
        <fullName evidence="1">Protease HtpX homolog</fullName>
        <ecNumber evidence="1">3.4.24.-</ecNumber>
    </recommendedName>
</protein>
<reference key="1">
    <citation type="journal article" date="2002" name="Genome Res.">
        <title>A complete sequence of the T. tengcongensis genome.</title>
        <authorList>
            <person name="Bao Q."/>
            <person name="Tian Y."/>
            <person name="Li W."/>
            <person name="Xu Z."/>
            <person name="Xuan Z."/>
            <person name="Hu S."/>
            <person name="Dong W."/>
            <person name="Yang J."/>
            <person name="Chen Y."/>
            <person name="Xue Y."/>
            <person name="Xu Y."/>
            <person name="Lai X."/>
            <person name="Huang L."/>
            <person name="Dong X."/>
            <person name="Ma Y."/>
            <person name="Ling L."/>
            <person name="Tan H."/>
            <person name="Chen R."/>
            <person name="Wang J."/>
            <person name="Yu J."/>
            <person name="Yang H."/>
        </authorList>
    </citation>
    <scope>NUCLEOTIDE SEQUENCE [LARGE SCALE GENOMIC DNA]</scope>
    <source>
        <strain>DSM 15242 / JCM 11007 / NBRC 100824 / MB4</strain>
    </source>
</reference>
<evidence type="ECO:0000255" key="1">
    <source>
        <dbReference type="HAMAP-Rule" id="MF_00188"/>
    </source>
</evidence>
<accession>Q8R936</accession>
<feature type="chain" id="PRO_0000138902" description="Protease HtpX homolog">
    <location>
        <begin position="1"/>
        <end position="299"/>
    </location>
</feature>
<feature type="transmembrane region" description="Helical" evidence="1">
    <location>
        <begin position="19"/>
        <end position="39"/>
    </location>
</feature>
<feature type="transmembrane region" description="Helical" evidence="1">
    <location>
        <begin position="41"/>
        <end position="61"/>
    </location>
</feature>
<feature type="transmembrane region" description="Helical" evidence="1">
    <location>
        <begin position="156"/>
        <end position="176"/>
    </location>
</feature>
<feature type="transmembrane region" description="Helical" evidence="1">
    <location>
        <begin position="198"/>
        <end position="218"/>
    </location>
</feature>
<feature type="active site" evidence="1">
    <location>
        <position position="147"/>
    </location>
</feature>
<feature type="binding site" evidence="1">
    <location>
        <position position="146"/>
    </location>
    <ligand>
        <name>Zn(2+)</name>
        <dbReference type="ChEBI" id="CHEBI:29105"/>
        <note>catalytic</note>
    </ligand>
</feature>
<feature type="binding site" evidence="1">
    <location>
        <position position="150"/>
    </location>
    <ligand>
        <name>Zn(2+)</name>
        <dbReference type="ChEBI" id="CHEBI:29105"/>
        <note>catalytic</note>
    </ligand>
</feature>
<feature type="binding site" evidence="1">
    <location>
        <position position="227"/>
    </location>
    <ligand>
        <name>Zn(2+)</name>
        <dbReference type="ChEBI" id="CHEBI:29105"/>
        <note>catalytic</note>
    </ligand>
</feature>
<sequence>MTKRTLYELQAENVRKTYLFIVLFSLILFAVGYFFVWYFNWGITGIIFLAIFIVLYNWIAYEQSDKIALTSVGAVPADPEKFYVLHNIVEEVALAAGVPKPKVYVMNEPQPNAFATGKDPKHASICVTTGLLQMMNREELQGVIAHEMSHIRNRDILLMTVVAIVAGLIILLRDVFLRSMWWGIGGERRRDKNDNLGIILLLIGLILSIIAPIVVLIIRSAISRQREYLADATGAYIVRDPYGLASALEKIGNYTRPMRTASSATAHMFISNPFGKVEYLFATHPPIEERIKRLKSLTI</sequence>
<gene>
    <name evidence="1" type="primary">htpX</name>
    <name type="synonym">htpX2</name>
    <name type="ordered locus">TTE1794</name>
</gene>
<dbReference type="EC" id="3.4.24.-" evidence="1"/>
<dbReference type="EMBL" id="AE008691">
    <property type="protein sequence ID" value="AAM24986.1"/>
    <property type="molecule type" value="Genomic_DNA"/>
</dbReference>
<dbReference type="RefSeq" id="WP_011025986.1">
    <property type="nucleotide sequence ID" value="NC_003869.1"/>
</dbReference>
<dbReference type="SMR" id="Q8R936"/>
<dbReference type="STRING" id="273068.TTE1794"/>
<dbReference type="KEGG" id="tte:TTE1794"/>
<dbReference type="eggNOG" id="COG0501">
    <property type="taxonomic scope" value="Bacteria"/>
</dbReference>
<dbReference type="HOGENOM" id="CLU_042266_3_0_9"/>
<dbReference type="OrthoDB" id="15218at2"/>
<dbReference type="Proteomes" id="UP000000555">
    <property type="component" value="Chromosome"/>
</dbReference>
<dbReference type="GO" id="GO:0005886">
    <property type="term" value="C:plasma membrane"/>
    <property type="evidence" value="ECO:0007669"/>
    <property type="project" value="UniProtKB-SubCell"/>
</dbReference>
<dbReference type="GO" id="GO:0004222">
    <property type="term" value="F:metalloendopeptidase activity"/>
    <property type="evidence" value="ECO:0007669"/>
    <property type="project" value="UniProtKB-UniRule"/>
</dbReference>
<dbReference type="GO" id="GO:0008270">
    <property type="term" value="F:zinc ion binding"/>
    <property type="evidence" value="ECO:0007669"/>
    <property type="project" value="UniProtKB-UniRule"/>
</dbReference>
<dbReference type="GO" id="GO:0006508">
    <property type="term" value="P:proteolysis"/>
    <property type="evidence" value="ECO:0007669"/>
    <property type="project" value="UniProtKB-KW"/>
</dbReference>
<dbReference type="CDD" id="cd07340">
    <property type="entry name" value="M48B_Htpx_like"/>
    <property type="match status" value="1"/>
</dbReference>
<dbReference type="Gene3D" id="3.30.2010.10">
    <property type="entry name" value="Metalloproteases ('zincins'), catalytic domain"/>
    <property type="match status" value="1"/>
</dbReference>
<dbReference type="HAMAP" id="MF_00188">
    <property type="entry name" value="Pept_M48_protease_HtpX"/>
    <property type="match status" value="1"/>
</dbReference>
<dbReference type="InterPro" id="IPR050083">
    <property type="entry name" value="HtpX_protease"/>
</dbReference>
<dbReference type="InterPro" id="IPR022919">
    <property type="entry name" value="Pept_M48_protease_HtpX"/>
</dbReference>
<dbReference type="InterPro" id="IPR001915">
    <property type="entry name" value="Peptidase_M48"/>
</dbReference>
<dbReference type="NCBIfam" id="NF003425">
    <property type="entry name" value="PRK04897.1"/>
    <property type="match status" value="1"/>
</dbReference>
<dbReference type="PANTHER" id="PTHR43221">
    <property type="entry name" value="PROTEASE HTPX"/>
    <property type="match status" value="1"/>
</dbReference>
<dbReference type="PANTHER" id="PTHR43221:SF1">
    <property type="entry name" value="PROTEASE HTPX"/>
    <property type="match status" value="1"/>
</dbReference>
<dbReference type="Pfam" id="PF01435">
    <property type="entry name" value="Peptidase_M48"/>
    <property type="match status" value="1"/>
</dbReference>